<proteinExistence type="inferred from homology"/>
<accession>A8Z6F6</accession>
<sequence>MKNLEEFERNLGYKFKKSELLEEALTHKSTKQALNNERLEFLGDAVMDLLVAEYLFKKFSKIAEGDMSKLRAALVNEKSFANMARRLKMGEFLRLSQAEENNGGREKDSILSDAFEAVMGAIYLEAGLLKVREISISLLELCYPQIDFAHLEKDYKTALQEVTQATLGVIPTYELIGSFGPDHKKEFEIALLLNGKEISRAVGSSKKQAQQLAAKIALEKIKK</sequence>
<reference key="1">
    <citation type="submission" date="2007-10" db="EMBL/GenBank/DDBJ databases">
        <title>Genome sequence of Campylobacter concisus 13826 isolated from human feces.</title>
        <authorList>
            <person name="Fouts D.E."/>
            <person name="Mongodin E.F."/>
            <person name="Puiu D."/>
            <person name="Sebastian Y."/>
            <person name="Miller W.G."/>
            <person name="Mandrell R.E."/>
            <person name="On S."/>
            <person name="Nelson K.E."/>
        </authorList>
    </citation>
    <scope>NUCLEOTIDE SEQUENCE [LARGE SCALE GENOMIC DNA]</scope>
    <source>
        <strain>13826</strain>
    </source>
</reference>
<comment type="function">
    <text evidence="1">Digests double-stranded RNA. Involved in the processing of primary rRNA transcript to yield the immediate precursors to the large and small rRNAs (23S and 16S). Processes some mRNAs, and tRNAs when they are encoded in the rRNA operon. Processes pre-crRNA and tracrRNA of type II CRISPR loci if present in the organism.</text>
</comment>
<comment type="catalytic activity">
    <reaction evidence="1">
        <text>Endonucleolytic cleavage to 5'-phosphomonoester.</text>
        <dbReference type="EC" id="3.1.26.3"/>
    </reaction>
</comment>
<comment type="cofactor">
    <cofactor evidence="1">
        <name>Mg(2+)</name>
        <dbReference type="ChEBI" id="CHEBI:18420"/>
    </cofactor>
</comment>
<comment type="subunit">
    <text evidence="1">Homodimer.</text>
</comment>
<comment type="subcellular location">
    <subcellularLocation>
        <location evidence="1">Cytoplasm</location>
    </subcellularLocation>
</comment>
<comment type="similarity">
    <text evidence="1">Belongs to the ribonuclease III family.</text>
</comment>
<dbReference type="EC" id="3.1.26.3" evidence="1"/>
<dbReference type="EMBL" id="CP000792">
    <property type="protein sequence ID" value="ABW74738.1"/>
    <property type="molecule type" value="Genomic_DNA"/>
</dbReference>
<dbReference type="RefSeq" id="WP_048809746.1">
    <property type="nucleotide sequence ID" value="NC_009802.2"/>
</dbReference>
<dbReference type="SMR" id="A8Z6F6"/>
<dbReference type="STRING" id="360104.CCC13826_0792"/>
<dbReference type="KEGG" id="cco:CCC13826_0792"/>
<dbReference type="eggNOG" id="COG0571">
    <property type="taxonomic scope" value="Bacteria"/>
</dbReference>
<dbReference type="HOGENOM" id="CLU_000907_1_3_7"/>
<dbReference type="OrthoDB" id="9805026at2"/>
<dbReference type="Proteomes" id="UP000001121">
    <property type="component" value="Chromosome"/>
</dbReference>
<dbReference type="GO" id="GO:0005737">
    <property type="term" value="C:cytoplasm"/>
    <property type="evidence" value="ECO:0007669"/>
    <property type="project" value="UniProtKB-SubCell"/>
</dbReference>
<dbReference type="GO" id="GO:0003725">
    <property type="term" value="F:double-stranded RNA binding"/>
    <property type="evidence" value="ECO:0007669"/>
    <property type="project" value="TreeGrafter"/>
</dbReference>
<dbReference type="GO" id="GO:0046872">
    <property type="term" value="F:metal ion binding"/>
    <property type="evidence" value="ECO:0007669"/>
    <property type="project" value="UniProtKB-KW"/>
</dbReference>
<dbReference type="GO" id="GO:0004525">
    <property type="term" value="F:ribonuclease III activity"/>
    <property type="evidence" value="ECO:0007669"/>
    <property type="project" value="UniProtKB-UniRule"/>
</dbReference>
<dbReference type="GO" id="GO:0019843">
    <property type="term" value="F:rRNA binding"/>
    <property type="evidence" value="ECO:0007669"/>
    <property type="project" value="UniProtKB-KW"/>
</dbReference>
<dbReference type="GO" id="GO:0006397">
    <property type="term" value="P:mRNA processing"/>
    <property type="evidence" value="ECO:0007669"/>
    <property type="project" value="UniProtKB-UniRule"/>
</dbReference>
<dbReference type="GO" id="GO:0010468">
    <property type="term" value="P:regulation of gene expression"/>
    <property type="evidence" value="ECO:0007669"/>
    <property type="project" value="TreeGrafter"/>
</dbReference>
<dbReference type="GO" id="GO:0006364">
    <property type="term" value="P:rRNA processing"/>
    <property type="evidence" value="ECO:0007669"/>
    <property type="project" value="UniProtKB-UniRule"/>
</dbReference>
<dbReference type="GO" id="GO:0008033">
    <property type="term" value="P:tRNA processing"/>
    <property type="evidence" value="ECO:0007669"/>
    <property type="project" value="UniProtKB-KW"/>
</dbReference>
<dbReference type="CDD" id="cd10845">
    <property type="entry name" value="DSRM_RNAse_III_family"/>
    <property type="match status" value="1"/>
</dbReference>
<dbReference type="CDD" id="cd00593">
    <property type="entry name" value="RIBOc"/>
    <property type="match status" value="1"/>
</dbReference>
<dbReference type="FunFam" id="1.10.1520.10:FF:000001">
    <property type="entry name" value="Ribonuclease 3"/>
    <property type="match status" value="1"/>
</dbReference>
<dbReference type="Gene3D" id="3.30.160.20">
    <property type="match status" value="1"/>
</dbReference>
<dbReference type="Gene3D" id="1.10.1520.10">
    <property type="entry name" value="Ribonuclease III domain"/>
    <property type="match status" value="1"/>
</dbReference>
<dbReference type="HAMAP" id="MF_00104">
    <property type="entry name" value="RNase_III"/>
    <property type="match status" value="1"/>
</dbReference>
<dbReference type="InterPro" id="IPR014720">
    <property type="entry name" value="dsRBD_dom"/>
</dbReference>
<dbReference type="InterPro" id="IPR011907">
    <property type="entry name" value="RNase_III"/>
</dbReference>
<dbReference type="InterPro" id="IPR000999">
    <property type="entry name" value="RNase_III_dom"/>
</dbReference>
<dbReference type="InterPro" id="IPR036389">
    <property type="entry name" value="RNase_III_sf"/>
</dbReference>
<dbReference type="NCBIfam" id="TIGR02191">
    <property type="entry name" value="RNaseIII"/>
    <property type="match status" value="1"/>
</dbReference>
<dbReference type="PANTHER" id="PTHR11207:SF0">
    <property type="entry name" value="RIBONUCLEASE 3"/>
    <property type="match status" value="1"/>
</dbReference>
<dbReference type="PANTHER" id="PTHR11207">
    <property type="entry name" value="RIBONUCLEASE III"/>
    <property type="match status" value="1"/>
</dbReference>
<dbReference type="Pfam" id="PF00035">
    <property type="entry name" value="dsrm"/>
    <property type="match status" value="1"/>
</dbReference>
<dbReference type="Pfam" id="PF14622">
    <property type="entry name" value="Ribonucleas_3_3"/>
    <property type="match status" value="1"/>
</dbReference>
<dbReference type="SMART" id="SM00358">
    <property type="entry name" value="DSRM"/>
    <property type="match status" value="1"/>
</dbReference>
<dbReference type="SMART" id="SM00535">
    <property type="entry name" value="RIBOc"/>
    <property type="match status" value="1"/>
</dbReference>
<dbReference type="SUPFAM" id="SSF54768">
    <property type="entry name" value="dsRNA-binding domain-like"/>
    <property type="match status" value="1"/>
</dbReference>
<dbReference type="SUPFAM" id="SSF69065">
    <property type="entry name" value="RNase III domain-like"/>
    <property type="match status" value="1"/>
</dbReference>
<dbReference type="PROSITE" id="PS50137">
    <property type="entry name" value="DS_RBD"/>
    <property type="match status" value="1"/>
</dbReference>
<dbReference type="PROSITE" id="PS00517">
    <property type="entry name" value="RNASE_3_1"/>
    <property type="match status" value="1"/>
</dbReference>
<dbReference type="PROSITE" id="PS50142">
    <property type="entry name" value="RNASE_3_2"/>
    <property type="match status" value="1"/>
</dbReference>
<evidence type="ECO:0000255" key="1">
    <source>
        <dbReference type="HAMAP-Rule" id="MF_00104"/>
    </source>
</evidence>
<feature type="chain" id="PRO_1000075732" description="Ribonuclease 3">
    <location>
        <begin position="1"/>
        <end position="223"/>
    </location>
</feature>
<feature type="domain" description="RNase III" evidence="1">
    <location>
        <begin position="4"/>
        <end position="127"/>
    </location>
</feature>
<feature type="domain" description="DRBM" evidence="1">
    <location>
        <begin position="154"/>
        <end position="223"/>
    </location>
</feature>
<feature type="active site" evidence="1">
    <location>
        <position position="44"/>
    </location>
</feature>
<feature type="active site" evidence="1">
    <location>
        <position position="116"/>
    </location>
</feature>
<feature type="binding site" evidence="1">
    <location>
        <position position="40"/>
    </location>
    <ligand>
        <name>Mg(2+)</name>
        <dbReference type="ChEBI" id="CHEBI:18420"/>
    </ligand>
</feature>
<feature type="binding site" evidence="1">
    <location>
        <position position="113"/>
    </location>
    <ligand>
        <name>Mg(2+)</name>
        <dbReference type="ChEBI" id="CHEBI:18420"/>
    </ligand>
</feature>
<feature type="binding site" evidence="1">
    <location>
        <position position="116"/>
    </location>
    <ligand>
        <name>Mg(2+)</name>
        <dbReference type="ChEBI" id="CHEBI:18420"/>
    </ligand>
</feature>
<protein>
    <recommendedName>
        <fullName evidence="1">Ribonuclease 3</fullName>
        <ecNumber evidence="1">3.1.26.3</ecNumber>
    </recommendedName>
    <alternativeName>
        <fullName evidence="1">Ribonuclease III</fullName>
        <shortName evidence="1">RNase III</shortName>
    </alternativeName>
</protein>
<organism>
    <name type="scientific">Campylobacter concisus (strain 13826)</name>
    <dbReference type="NCBI Taxonomy" id="360104"/>
    <lineage>
        <taxon>Bacteria</taxon>
        <taxon>Pseudomonadati</taxon>
        <taxon>Campylobacterota</taxon>
        <taxon>Epsilonproteobacteria</taxon>
        <taxon>Campylobacterales</taxon>
        <taxon>Campylobacteraceae</taxon>
        <taxon>Campylobacter</taxon>
    </lineage>
</organism>
<gene>
    <name evidence="1" type="primary">rnc</name>
    <name type="ordered locus">Ccon26_03320</name>
    <name type="ORF">CCC13826_0792</name>
</gene>
<keyword id="KW-0963">Cytoplasm</keyword>
<keyword id="KW-0255">Endonuclease</keyword>
<keyword id="KW-0378">Hydrolase</keyword>
<keyword id="KW-0460">Magnesium</keyword>
<keyword id="KW-0479">Metal-binding</keyword>
<keyword id="KW-0507">mRNA processing</keyword>
<keyword id="KW-0540">Nuclease</keyword>
<keyword id="KW-0694">RNA-binding</keyword>
<keyword id="KW-0698">rRNA processing</keyword>
<keyword id="KW-0699">rRNA-binding</keyword>
<keyword id="KW-0819">tRNA processing</keyword>
<name>RNC_CAMC1</name>